<organism>
    <name type="scientific">Mycoplasmopsis synoviae (strain 53)</name>
    <name type="common">Mycoplasma synoviae</name>
    <dbReference type="NCBI Taxonomy" id="262723"/>
    <lineage>
        <taxon>Bacteria</taxon>
        <taxon>Bacillati</taxon>
        <taxon>Mycoplasmatota</taxon>
        <taxon>Mycoplasmoidales</taxon>
        <taxon>Metamycoplasmataceae</taxon>
        <taxon>Mycoplasmopsis</taxon>
    </lineage>
</organism>
<reference key="1">
    <citation type="journal article" date="2005" name="J. Bacteriol.">
        <title>Swine and poultry pathogens: the complete genome sequences of two strains of Mycoplasma hyopneumoniae and a strain of Mycoplasma synoviae.</title>
        <authorList>
            <person name="Vasconcelos A.T.R."/>
            <person name="Ferreira H.B."/>
            <person name="Bizarro C.V."/>
            <person name="Bonatto S.L."/>
            <person name="Carvalho M.O."/>
            <person name="Pinto P.M."/>
            <person name="Almeida D.F."/>
            <person name="Almeida L.G.P."/>
            <person name="Almeida R."/>
            <person name="Alves-Junior L."/>
            <person name="Assuncao E.N."/>
            <person name="Azevedo V.A.C."/>
            <person name="Bogo M.R."/>
            <person name="Brigido M.M."/>
            <person name="Brocchi M."/>
            <person name="Burity H.A."/>
            <person name="Camargo A.A."/>
            <person name="Camargo S.S."/>
            <person name="Carepo M.S."/>
            <person name="Carraro D.M."/>
            <person name="de Mattos Cascardo J.C."/>
            <person name="Castro L.A."/>
            <person name="Cavalcanti G."/>
            <person name="Chemale G."/>
            <person name="Collevatti R.G."/>
            <person name="Cunha C.W."/>
            <person name="Dallagiovanna B."/>
            <person name="Dambros B.P."/>
            <person name="Dellagostin O.A."/>
            <person name="Falcao C."/>
            <person name="Fantinatti-Garboggini F."/>
            <person name="Felipe M.S.S."/>
            <person name="Fiorentin L."/>
            <person name="Franco G.R."/>
            <person name="Freitas N.S.A."/>
            <person name="Frias D."/>
            <person name="Grangeiro T.B."/>
            <person name="Grisard E.C."/>
            <person name="Guimaraes C.T."/>
            <person name="Hungria M."/>
            <person name="Jardim S.N."/>
            <person name="Krieger M.A."/>
            <person name="Laurino J.P."/>
            <person name="Lima L.F.A."/>
            <person name="Lopes M.I."/>
            <person name="Loreto E.L.S."/>
            <person name="Madeira H.M.F."/>
            <person name="Manfio G.P."/>
            <person name="Maranhao A.Q."/>
            <person name="Martinkovics C.T."/>
            <person name="Medeiros S.R.B."/>
            <person name="Moreira M.A.M."/>
            <person name="Neiva M."/>
            <person name="Ramalho-Neto C.E."/>
            <person name="Nicolas M.F."/>
            <person name="Oliveira S.C."/>
            <person name="Paixao R.F.C."/>
            <person name="Pedrosa F.O."/>
            <person name="Pena S.D.J."/>
            <person name="Pereira M."/>
            <person name="Pereira-Ferrari L."/>
            <person name="Piffer I."/>
            <person name="Pinto L.S."/>
            <person name="Potrich D.P."/>
            <person name="Salim A.C.M."/>
            <person name="Santos F.R."/>
            <person name="Schmitt R."/>
            <person name="Schneider M.P.C."/>
            <person name="Schrank A."/>
            <person name="Schrank I.S."/>
            <person name="Schuck A.F."/>
            <person name="Seuanez H.N."/>
            <person name="Silva D.W."/>
            <person name="Silva R."/>
            <person name="Silva S.C."/>
            <person name="Soares C.M.A."/>
            <person name="Souza K.R.L."/>
            <person name="Souza R.C."/>
            <person name="Staats C.C."/>
            <person name="Steffens M.B.R."/>
            <person name="Teixeira S.M.R."/>
            <person name="Urmenyi T.P."/>
            <person name="Vainstein M.H."/>
            <person name="Zuccherato L.W."/>
            <person name="Simpson A.J.G."/>
            <person name="Zaha A."/>
        </authorList>
    </citation>
    <scope>NUCLEOTIDE SEQUENCE [LARGE SCALE GENOMIC DNA]</scope>
    <source>
        <strain>53</strain>
    </source>
</reference>
<dbReference type="EMBL" id="AE017245">
    <property type="protein sequence ID" value="AAZ43984.1"/>
    <property type="molecule type" value="Genomic_DNA"/>
</dbReference>
<dbReference type="RefSeq" id="WP_011283713.1">
    <property type="nucleotide sequence ID" value="NC_007294.1"/>
</dbReference>
<dbReference type="SMR" id="Q4A5I7"/>
<dbReference type="STRING" id="262723.MS53_0577"/>
<dbReference type="GeneID" id="93530369"/>
<dbReference type="KEGG" id="msy:MS53_0577"/>
<dbReference type="HOGENOM" id="CLU_135723_6_2_14"/>
<dbReference type="Proteomes" id="UP000000549">
    <property type="component" value="Chromosome"/>
</dbReference>
<dbReference type="GO" id="GO:0005737">
    <property type="term" value="C:cytoplasm"/>
    <property type="evidence" value="ECO:0007669"/>
    <property type="project" value="UniProtKB-ARBA"/>
</dbReference>
<dbReference type="GO" id="GO:1990904">
    <property type="term" value="C:ribonucleoprotein complex"/>
    <property type="evidence" value="ECO:0007669"/>
    <property type="project" value="UniProtKB-KW"/>
</dbReference>
<dbReference type="GO" id="GO:0005840">
    <property type="term" value="C:ribosome"/>
    <property type="evidence" value="ECO:0007669"/>
    <property type="project" value="UniProtKB-KW"/>
</dbReference>
<dbReference type="GO" id="GO:0003735">
    <property type="term" value="F:structural constituent of ribosome"/>
    <property type="evidence" value="ECO:0007669"/>
    <property type="project" value="InterPro"/>
</dbReference>
<dbReference type="GO" id="GO:0006412">
    <property type="term" value="P:translation"/>
    <property type="evidence" value="ECO:0007669"/>
    <property type="project" value="UniProtKB-UniRule"/>
</dbReference>
<dbReference type="HAMAP" id="MF_00251">
    <property type="entry name" value="Ribosomal_bL36"/>
    <property type="match status" value="1"/>
</dbReference>
<dbReference type="InterPro" id="IPR000473">
    <property type="entry name" value="Ribosomal_bL36"/>
</dbReference>
<dbReference type="InterPro" id="IPR035977">
    <property type="entry name" value="Ribosomal_bL36_sp"/>
</dbReference>
<dbReference type="NCBIfam" id="TIGR01022">
    <property type="entry name" value="rpmJ_bact"/>
    <property type="match status" value="1"/>
</dbReference>
<dbReference type="PANTHER" id="PTHR42888">
    <property type="entry name" value="50S RIBOSOMAL PROTEIN L36, CHLOROPLASTIC"/>
    <property type="match status" value="1"/>
</dbReference>
<dbReference type="PANTHER" id="PTHR42888:SF1">
    <property type="entry name" value="LARGE RIBOSOMAL SUBUNIT PROTEIN BL36C"/>
    <property type="match status" value="1"/>
</dbReference>
<dbReference type="Pfam" id="PF00444">
    <property type="entry name" value="Ribosomal_L36"/>
    <property type="match status" value="1"/>
</dbReference>
<dbReference type="SUPFAM" id="SSF57840">
    <property type="entry name" value="Ribosomal protein L36"/>
    <property type="match status" value="1"/>
</dbReference>
<dbReference type="PROSITE" id="PS00828">
    <property type="entry name" value="RIBOSOMAL_L36"/>
    <property type="match status" value="1"/>
</dbReference>
<gene>
    <name evidence="1" type="primary">rpmJ</name>
    <name type="ordered locus">MS53_0577</name>
</gene>
<proteinExistence type="inferred from homology"/>
<comment type="similarity">
    <text evidence="1">Belongs to the bacterial ribosomal protein bL36 family.</text>
</comment>
<keyword id="KW-1185">Reference proteome</keyword>
<keyword id="KW-0687">Ribonucleoprotein</keyword>
<keyword id="KW-0689">Ribosomal protein</keyword>
<name>RL36_MYCS5</name>
<evidence type="ECO:0000255" key="1">
    <source>
        <dbReference type="HAMAP-Rule" id="MF_00251"/>
    </source>
</evidence>
<evidence type="ECO:0000305" key="2"/>
<feature type="chain" id="PRO_0000302250" description="Large ribosomal subunit protein bL36">
    <location>
        <begin position="1"/>
        <end position="37"/>
    </location>
</feature>
<protein>
    <recommendedName>
        <fullName evidence="1">Large ribosomal subunit protein bL36</fullName>
    </recommendedName>
    <alternativeName>
        <fullName evidence="2">50S ribosomal protein L36</fullName>
    </alternativeName>
</protein>
<accession>Q4A5I7</accession>
<sequence>MKVRSGVKKICKKCTIIKRKGVNRVICEIPKHKQRQG</sequence>